<gene>
    <name type="primary">merA</name>
</gene>
<sequence length="547" mass="57438">MTENAPTELAITGMTCDGCAAHVRKALEGVPGVREAQVSYPDATARVVLEGEVPMQRLIKAVVASGYGVHPRSDGASSTNDGQELHIAVIGSGGAAMACALKAVERGARVTLIERSTIGGTCVNIGCVPSKIMIRAAHIAHLRRESPFDGGIQAVAPTIQRTALLVQQQARVDELRHAKYEGILDGNPAITVLRGEARFKDSRSVVVHLNDGGERVVMFDRCLVATGASPAVPPIPGLKDTPYWTSTEGLVSESIPERLAVIGSSVVALELAQAFARLGSHVTILARGTLFLREDPAIGEAITAAFRAEGIEVLEHTQASQVAYADGEFVLATGHGELRADKLLVATGRAPNTRRLNLEAAGVAINAQGAIVIDQGMRTNSPNIYAAGDCTDQPQFVYVAAAAGTRAAINMMGGSAALDLTAMPAVVFTDPQVATVGYSGAEAHRDGIETDSRTLTLDNVPRALANFNTRGFIKLVAEVGSGRLIGVQVVAPEAGELIQTAALAIRNRMTVQELADQLFPYLTMVEGLKLAAQTFTRDVKQLSCCAG</sequence>
<accession>P17239</accession>
<dbReference type="EC" id="1.16.1.1" evidence="1"/>
<dbReference type="EMBL" id="D90110">
    <property type="protein sequence ID" value="BAA14139.3"/>
    <property type="molecule type" value="Genomic_DNA"/>
</dbReference>
<dbReference type="PIR" id="JQ0153">
    <property type="entry name" value="JQ0153"/>
</dbReference>
<dbReference type="RefSeq" id="WP_012537218.1">
    <property type="nucleotide sequence ID" value="NZ_JABFOH010000009.1"/>
</dbReference>
<dbReference type="SMR" id="P17239"/>
<dbReference type="GO" id="GO:0050660">
    <property type="term" value="F:flavin adenine dinucleotide binding"/>
    <property type="evidence" value="ECO:0007669"/>
    <property type="project" value="InterPro"/>
</dbReference>
<dbReference type="GO" id="GO:0016152">
    <property type="term" value="F:mercury (II) reductase (NADP+) activity"/>
    <property type="evidence" value="ECO:0007669"/>
    <property type="project" value="UniProtKB-EC"/>
</dbReference>
<dbReference type="GO" id="GO:0045340">
    <property type="term" value="F:mercury ion binding"/>
    <property type="evidence" value="ECO:0007669"/>
    <property type="project" value="InterPro"/>
</dbReference>
<dbReference type="GO" id="GO:0003955">
    <property type="term" value="F:NAD(P)H dehydrogenase (quinone) activity"/>
    <property type="evidence" value="ECO:0007669"/>
    <property type="project" value="TreeGrafter"/>
</dbReference>
<dbReference type="GO" id="GO:0050661">
    <property type="term" value="F:NADP binding"/>
    <property type="evidence" value="ECO:0007669"/>
    <property type="project" value="InterPro"/>
</dbReference>
<dbReference type="GO" id="GO:0016668">
    <property type="term" value="F:oxidoreductase activity, acting on a sulfur group of donors, NAD(P) as acceptor"/>
    <property type="evidence" value="ECO:0007669"/>
    <property type="project" value="InterPro"/>
</dbReference>
<dbReference type="GO" id="GO:0050787">
    <property type="term" value="P:detoxification of mercury ion"/>
    <property type="evidence" value="ECO:0007669"/>
    <property type="project" value="InterPro"/>
</dbReference>
<dbReference type="CDD" id="cd00371">
    <property type="entry name" value="HMA"/>
    <property type="match status" value="1"/>
</dbReference>
<dbReference type="FunFam" id="3.30.390.30:FF:000001">
    <property type="entry name" value="Dihydrolipoyl dehydrogenase"/>
    <property type="match status" value="1"/>
</dbReference>
<dbReference type="Gene3D" id="3.30.390.30">
    <property type="match status" value="1"/>
</dbReference>
<dbReference type="Gene3D" id="3.30.70.100">
    <property type="match status" value="1"/>
</dbReference>
<dbReference type="Gene3D" id="3.50.50.60">
    <property type="entry name" value="FAD/NAD(P)-binding domain"/>
    <property type="match status" value="2"/>
</dbReference>
<dbReference type="InterPro" id="IPR036188">
    <property type="entry name" value="FAD/NAD-bd_sf"/>
</dbReference>
<dbReference type="InterPro" id="IPR023753">
    <property type="entry name" value="FAD/NAD-binding_dom"/>
</dbReference>
<dbReference type="InterPro" id="IPR016156">
    <property type="entry name" value="FAD/NAD-linked_Rdtase_dimer_sf"/>
</dbReference>
<dbReference type="InterPro" id="IPR017969">
    <property type="entry name" value="Heavy-metal-associated_CS"/>
</dbReference>
<dbReference type="InterPro" id="IPR006121">
    <property type="entry name" value="HMA_dom"/>
</dbReference>
<dbReference type="InterPro" id="IPR036163">
    <property type="entry name" value="HMA_dom_sf"/>
</dbReference>
<dbReference type="InterPro" id="IPR021179">
    <property type="entry name" value="Mercury_reductase_MerA"/>
</dbReference>
<dbReference type="InterPro" id="IPR001100">
    <property type="entry name" value="Pyr_nuc-diS_OxRdtase"/>
</dbReference>
<dbReference type="InterPro" id="IPR004099">
    <property type="entry name" value="Pyr_nucl-diS_OxRdtase_dimer"/>
</dbReference>
<dbReference type="InterPro" id="IPR012999">
    <property type="entry name" value="Pyr_OxRdtase_I_AS"/>
</dbReference>
<dbReference type="NCBIfam" id="TIGR02053">
    <property type="entry name" value="MerA"/>
    <property type="match status" value="1"/>
</dbReference>
<dbReference type="NCBIfam" id="NF010311">
    <property type="entry name" value="PRK13748.1"/>
    <property type="match status" value="1"/>
</dbReference>
<dbReference type="PANTHER" id="PTHR43014">
    <property type="entry name" value="MERCURIC REDUCTASE"/>
    <property type="match status" value="1"/>
</dbReference>
<dbReference type="PANTHER" id="PTHR43014:SF2">
    <property type="entry name" value="MERCURIC REDUCTASE"/>
    <property type="match status" value="1"/>
</dbReference>
<dbReference type="Pfam" id="PF00403">
    <property type="entry name" value="HMA"/>
    <property type="match status" value="1"/>
</dbReference>
<dbReference type="Pfam" id="PF07992">
    <property type="entry name" value="Pyr_redox_2"/>
    <property type="match status" value="1"/>
</dbReference>
<dbReference type="Pfam" id="PF02852">
    <property type="entry name" value="Pyr_redox_dim"/>
    <property type="match status" value="1"/>
</dbReference>
<dbReference type="PIRSF" id="PIRSF000350">
    <property type="entry name" value="Mercury_reductase_MerA"/>
    <property type="match status" value="1"/>
</dbReference>
<dbReference type="PRINTS" id="PR00945">
    <property type="entry name" value="HGRDTASE"/>
</dbReference>
<dbReference type="SUPFAM" id="SSF51905">
    <property type="entry name" value="FAD/NAD(P)-binding domain"/>
    <property type="match status" value="1"/>
</dbReference>
<dbReference type="SUPFAM" id="SSF55424">
    <property type="entry name" value="FAD/NAD-linked reductases, dimerisation (C-terminal) domain"/>
    <property type="match status" value="1"/>
</dbReference>
<dbReference type="SUPFAM" id="SSF55008">
    <property type="entry name" value="HMA, heavy metal-associated domain"/>
    <property type="match status" value="1"/>
</dbReference>
<dbReference type="PROSITE" id="PS01047">
    <property type="entry name" value="HMA_1"/>
    <property type="match status" value="1"/>
</dbReference>
<dbReference type="PROSITE" id="PS50846">
    <property type="entry name" value="HMA_2"/>
    <property type="match status" value="1"/>
</dbReference>
<dbReference type="PROSITE" id="PS00076">
    <property type="entry name" value="PYRIDINE_REDOX_1"/>
    <property type="match status" value="1"/>
</dbReference>
<reference key="1">
    <citation type="journal article" date="1989" name="Gene">
        <title>Nucleotide sequence of the Thiobacillus ferrooxidans chromosomal gene encoding mercuric reductase.</title>
        <authorList>
            <person name="Inoue C."/>
            <person name="Sugawara K."/>
            <person name="Shiratori T."/>
            <person name="Kusano T."/>
            <person name="Kitagawa Y."/>
        </authorList>
    </citation>
    <scope>NUCLEOTIDE SEQUENCE [GENOMIC DNA]</scope>
    <scope>PROTEIN SEQUENCE OF 1-15</scope>
    <source>
        <strain>E-15</strain>
    </source>
</reference>
<reference key="2">
    <citation type="submission" date="2002-12" db="EMBL/GenBank/DDBJ databases">
        <authorList>
            <person name="Inoue C."/>
            <person name="Sugawara K."/>
            <person name="Shiratori T."/>
            <person name="Kusano T."/>
            <person name="Kitagawa Y."/>
        </authorList>
    </citation>
    <scope>SEQUENCE REVISION TO 92; 440; 454-455 AND 483</scope>
</reference>
<reference key="3">
    <citation type="journal article" date="1990" name="Gene">
        <title>Thiobacillus ferrooxidans mer operon: sequence analysis of the promoter and adjacent genes.</title>
        <authorList>
            <person name="Inoue C."/>
            <person name="Sugawara K."/>
            <person name="Kusano T."/>
        </authorList>
    </citation>
    <scope>NUCLEOTIDE SEQUENCE [GENOMIC DNA] OF 1-9</scope>
    <source>
        <strain>E-15</strain>
    </source>
</reference>
<feature type="chain" id="PRO_0000068005" description="Mercuric reductase">
    <location>
        <begin position="1"/>
        <end position="547"/>
    </location>
</feature>
<feature type="domain" description="HMA" evidence="2">
    <location>
        <begin position="5"/>
        <end position="70"/>
    </location>
</feature>
<feature type="binding site" evidence="2">
    <location>
        <position position="16"/>
    </location>
    <ligand>
        <name>a metal cation</name>
        <dbReference type="ChEBI" id="CHEBI:25213"/>
    </ligand>
</feature>
<feature type="binding site" evidence="2">
    <location>
        <position position="19"/>
    </location>
    <ligand>
        <name>a metal cation</name>
        <dbReference type="ChEBI" id="CHEBI:25213"/>
    </ligand>
</feature>
<feature type="binding site" evidence="1">
    <location>
        <position position="96"/>
    </location>
    <ligand>
        <name>FAD</name>
        <dbReference type="ChEBI" id="CHEBI:57692"/>
    </ligand>
</feature>
<feature type="binding site" evidence="1">
    <location>
        <position position="121"/>
    </location>
    <ligand>
        <name>FAD</name>
        <dbReference type="ChEBI" id="CHEBI:57692"/>
    </ligand>
</feature>
<feature type="binding site" evidence="1">
    <location>
        <position position="131"/>
    </location>
    <ligand>
        <name>FAD</name>
        <dbReference type="ChEBI" id="CHEBI:57692"/>
    </ligand>
</feature>
<feature type="binding site" evidence="1">
    <location>
        <position position="197"/>
    </location>
    <ligand>
        <name>FAD</name>
        <dbReference type="ChEBI" id="CHEBI:57692"/>
    </ligand>
</feature>
<feature type="binding site" evidence="1">
    <location>
        <position position="389"/>
    </location>
    <ligand>
        <name>FAD</name>
        <dbReference type="ChEBI" id="CHEBI:57692"/>
    </ligand>
</feature>
<feature type="binding site" evidence="1">
    <location>
        <position position="397"/>
    </location>
    <ligand>
        <name>FAD</name>
        <dbReference type="ChEBI" id="CHEBI:57692"/>
    </ligand>
</feature>
<feature type="binding site" evidence="1">
    <location>
        <position position="544"/>
    </location>
    <ligand>
        <name>Hg(2+)</name>
        <dbReference type="ChEBI" id="CHEBI:16793"/>
    </ligand>
</feature>
<feature type="binding site" evidence="1">
    <location>
        <position position="545"/>
    </location>
    <ligand>
        <name>Hg(2+)</name>
        <dbReference type="ChEBI" id="CHEBI:16793"/>
    </ligand>
</feature>
<feature type="disulfide bond" description="Redox-active" evidence="1">
    <location>
        <begin position="122"/>
        <end position="127"/>
    </location>
</feature>
<protein>
    <recommendedName>
        <fullName>Mercuric reductase</fullName>
        <ecNumber evidence="1">1.16.1.1</ecNumber>
    </recommendedName>
    <alternativeName>
        <fullName>Hg(II) reductase</fullName>
    </alternativeName>
</protein>
<keyword id="KW-0903">Direct protein sequencing</keyword>
<keyword id="KW-1015">Disulfide bond</keyword>
<keyword id="KW-0274">FAD</keyword>
<keyword id="KW-0285">Flavoprotein</keyword>
<keyword id="KW-0475">Mercuric resistance</keyword>
<keyword id="KW-0476">Mercury</keyword>
<keyword id="KW-0479">Metal-binding</keyword>
<keyword id="KW-0521">NADP</keyword>
<keyword id="KW-0560">Oxidoreductase</keyword>
<keyword id="KW-0676">Redox-active center</keyword>
<proteinExistence type="evidence at protein level"/>
<name>MERA_ACIFR</name>
<comment type="function">
    <text>Resistance to Hg(2+) in bacteria appears to be governed by a specialized system which includes mercuric reductase. MerA protein is responsible for volatilizing mercury as Hg(0).</text>
</comment>
<comment type="catalytic activity">
    <reaction evidence="1">
        <text>Hg + NADP(+) + H(+) = Hg(2+) + NADPH</text>
        <dbReference type="Rhea" id="RHEA:23856"/>
        <dbReference type="ChEBI" id="CHEBI:15378"/>
        <dbReference type="ChEBI" id="CHEBI:16170"/>
        <dbReference type="ChEBI" id="CHEBI:16793"/>
        <dbReference type="ChEBI" id="CHEBI:57783"/>
        <dbReference type="ChEBI" id="CHEBI:58349"/>
        <dbReference type="EC" id="1.16.1.1"/>
    </reaction>
</comment>
<comment type="cofactor">
    <cofactor evidence="1">
        <name>FAD</name>
        <dbReference type="ChEBI" id="CHEBI:57692"/>
    </cofactor>
    <text evidence="1">Binds 1 FAD per subunit.</text>
</comment>
<comment type="subunit">
    <text evidence="1">Homodimer.</text>
</comment>
<comment type="miscellaneous">
    <text evidence="1">The active site is a redox-active disulfide bond.</text>
</comment>
<comment type="similarity">
    <text evidence="3">Belongs to the class-I pyridine nucleotide-disulfide oxidoreductase family.</text>
</comment>
<evidence type="ECO:0000250" key="1">
    <source>
        <dbReference type="UniProtKB" id="P00392"/>
    </source>
</evidence>
<evidence type="ECO:0000255" key="2">
    <source>
        <dbReference type="PROSITE-ProRule" id="PRU00280"/>
    </source>
</evidence>
<evidence type="ECO:0000305" key="3"/>
<organism>
    <name type="scientific">Acidithiobacillus ferrooxidans</name>
    <name type="common">Thiobacillus ferrooxidans</name>
    <dbReference type="NCBI Taxonomy" id="920"/>
    <lineage>
        <taxon>Bacteria</taxon>
        <taxon>Pseudomonadati</taxon>
        <taxon>Pseudomonadota</taxon>
        <taxon>Acidithiobacillia</taxon>
        <taxon>Acidithiobacillales</taxon>
        <taxon>Acidithiobacillaceae</taxon>
        <taxon>Acidithiobacillus</taxon>
    </lineage>
</organism>